<evidence type="ECO:0000255" key="1">
    <source>
        <dbReference type="HAMAP-Rule" id="MF_01014"/>
    </source>
</evidence>
<reference key="1">
    <citation type="journal article" date="2004" name="Proc. Natl. Acad. Sci. U.S.A.">
        <title>Genome sequence of the enterobacterial phytopathogen Erwinia carotovora subsp. atroseptica and characterization of virulence factors.</title>
        <authorList>
            <person name="Bell K.S."/>
            <person name="Sebaihia M."/>
            <person name="Pritchard L."/>
            <person name="Holden M.T.G."/>
            <person name="Hyman L.J."/>
            <person name="Holeva M.C."/>
            <person name="Thomson N.R."/>
            <person name="Bentley S.D."/>
            <person name="Churcher L.J.C."/>
            <person name="Mungall K."/>
            <person name="Atkin R."/>
            <person name="Bason N."/>
            <person name="Brooks K."/>
            <person name="Chillingworth T."/>
            <person name="Clark K."/>
            <person name="Doggett J."/>
            <person name="Fraser A."/>
            <person name="Hance Z."/>
            <person name="Hauser H."/>
            <person name="Jagels K."/>
            <person name="Moule S."/>
            <person name="Norbertczak H."/>
            <person name="Ormond D."/>
            <person name="Price C."/>
            <person name="Quail M.A."/>
            <person name="Sanders M."/>
            <person name="Walker D."/>
            <person name="Whitehead S."/>
            <person name="Salmond G.P.C."/>
            <person name="Birch P.R.J."/>
            <person name="Parkhill J."/>
            <person name="Toth I.K."/>
        </authorList>
    </citation>
    <scope>NUCLEOTIDE SEQUENCE [LARGE SCALE GENOMIC DNA]</scope>
    <source>
        <strain>SCRI 1043 / ATCC BAA-672</strain>
    </source>
</reference>
<name>HIS4_PECAS</name>
<accession>Q6D407</accession>
<organism>
    <name type="scientific">Pectobacterium atrosepticum (strain SCRI 1043 / ATCC BAA-672)</name>
    <name type="common">Erwinia carotovora subsp. atroseptica</name>
    <dbReference type="NCBI Taxonomy" id="218491"/>
    <lineage>
        <taxon>Bacteria</taxon>
        <taxon>Pseudomonadati</taxon>
        <taxon>Pseudomonadota</taxon>
        <taxon>Gammaproteobacteria</taxon>
        <taxon>Enterobacterales</taxon>
        <taxon>Pectobacteriaceae</taxon>
        <taxon>Pectobacterium</taxon>
    </lineage>
</organism>
<sequence>MIIPALDLIDGQVVRLHQGDYGQQRQYGSDPLPRLQDYQQQGAGVLHLVDLTGAKNPSARQIPLLTTLLAGVSVPVQIGGGIRTEQDVEALLKAGASRVVIGSTAVKQPELVQQWFTRYGAEALVLALDVRIDANGTKYVAISGWQENSDATLEQIVEQYLPFGLKHVLCTDISRDGTLSGSNVELYREISQRYPQIAFQASGGIGNLTDIANLRSSGVQGVIVGRALLEGKFNVAEAISCWQNG</sequence>
<dbReference type="EC" id="5.3.1.16" evidence="1"/>
<dbReference type="EMBL" id="BX950851">
    <property type="protein sequence ID" value="CAG75486.1"/>
    <property type="molecule type" value="Genomic_DNA"/>
</dbReference>
<dbReference type="RefSeq" id="WP_011094132.1">
    <property type="nucleotide sequence ID" value="NC_004547.2"/>
</dbReference>
<dbReference type="SMR" id="Q6D407"/>
<dbReference type="STRING" id="218491.ECA2587"/>
<dbReference type="KEGG" id="eca:ECA2587"/>
<dbReference type="PATRIC" id="fig|218491.5.peg.2621"/>
<dbReference type="eggNOG" id="COG0106">
    <property type="taxonomic scope" value="Bacteria"/>
</dbReference>
<dbReference type="HOGENOM" id="CLU_048577_1_2_6"/>
<dbReference type="OrthoDB" id="9807749at2"/>
<dbReference type="UniPathway" id="UPA00031">
    <property type="reaction ID" value="UER00009"/>
</dbReference>
<dbReference type="Proteomes" id="UP000007966">
    <property type="component" value="Chromosome"/>
</dbReference>
<dbReference type="GO" id="GO:0005737">
    <property type="term" value="C:cytoplasm"/>
    <property type="evidence" value="ECO:0007669"/>
    <property type="project" value="UniProtKB-SubCell"/>
</dbReference>
<dbReference type="GO" id="GO:0003949">
    <property type="term" value="F:1-(5-phosphoribosyl)-5-[(5-phosphoribosylamino)methylideneamino]imidazole-4-carboxamide isomerase activity"/>
    <property type="evidence" value="ECO:0007669"/>
    <property type="project" value="UniProtKB-UniRule"/>
</dbReference>
<dbReference type="GO" id="GO:0000105">
    <property type="term" value="P:L-histidine biosynthetic process"/>
    <property type="evidence" value="ECO:0007669"/>
    <property type="project" value="UniProtKB-UniRule"/>
</dbReference>
<dbReference type="GO" id="GO:0000162">
    <property type="term" value="P:L-tryptophan biosynthetic process"/>
    <property type="evidence" value="ECO:0007669"/>
    <property type="project" value="TreeGrafter"/>
</dbReference>
<dbReference type="CDD" id="cd04732">
    <property type="entry name" value="HisA"/>
    <property type="match status" value="1"/>
</dbReference>
<dbReference type="FunFam" id="3.20.20.70:FF:000009">
    <property type="entry name" value="1-(5-phosphoribosyl)-5-[(5-phosphoribosylamino)methylideneamino] imidazole-4-carboxamide isomerase"/>
    <property type="match status" value="1"/>
</dbReference>
<dbReference type="Gene3D" id="3.20.20.70">
    <property type="entry name" value="Aldolase class I"/>
    <property type="match status" value="1"/>
</dbReference>
<dbReference type="HAMAP" id="MF_01014">
    <property type="entry name" value="HisA"/>
    <property type="match status" value="1"/>
</dbReference>
<dbReference type="InterPro" id="IPR013785">
    <property type="entry name" value="Aldolase_TIM"/>
</dbReference>
<dbReference type="InterPro" id="IPR006062">
    <property type="entry name" value="His_biosynth"/>
</dbReference>
<dbReference type="InterPro" id="IPR006063">
    <property type="entry name" value="HisA_bact_arch"/>
</dbReference>
<dbReference type="InterPro" id="IPR044524">
    <property type="entry name" value="Isoase_HisA-like"/>
</dbReference>
<dbReference type="InterPro" id="IPR023016">
    <property type="entry name" value="Isoase_HisA-like_bact"/>
</dbReference>
<dbReference type="InterPro" id="IPR011060">
    <property type="entry name" value="RibuloseP-bd_barrel"/>
</dbReference>
<dbReference type="NCBIfam" id="TIGR00007">
    <property type="entry name" value="1-(5-phosphoribosyl)-5-[(5-phosphoribosylamino)methylideneamino]imidazole-4-carboxamide isomerase"/>
    <property type="match status" value="1"/>
</dbReference>
<dbReference type="PANTHER" id="PTHR43090">
    <property type="entry name" value="1-(5-PHOSPHORIBOSYL)-5-[(5-PHOSPHORIBOSYLAMINO)METHYLIDENEAMINO] IMIDAZOLE-4-CARBOXAMIDE ISOMERASE"/>
    <property type="match status" value="1"/>
</dbReference>
<dbReference type="PANTHER" id="PTHR43090:SF2">
    <property type="entry name" value="1-(5-PHOSPHORIBOSYL)-5-[(5-PHOSPHORIBOSYLAMINO)METHYLIDENEAMINO] IMIDAZOLE-4-CARBOXAMIDE ISOMERASE"/>
    <property type="match status" value="1"/>
</dbReference>
<dbReference type="Pfam" id="PF00977">
    <property type="entry name" value="His_biosynth"/>
    <property type="match status" value="1"/>
</dbReference>
<dbReference type="SUPFAM" id="SSF51366">
    <property type="entry name" value="Ribulose-phoshate binding barrel"/>
    <property type="match status" value="1"/>
</dbReference>
<protein>
    <recommendedName>
        <fullName evidence="1">1-(5-phosphoribosyl)-5-[(5-phosphoribosylamino)methylideneamino] imidazole-4-carboxamide isomerase</fullName>
        <ecNumber evidence="1">5.3.1.16</ecNumber>
    </recommendedName>
    <alternativeName>
        <fullName evidence="1">Phosphoribosylformimino-5-aminoimidazole carboxamide ribotide isomerase</fullName>
    </alternativeName>
</protein>
<gene>
    <name evidence="1" type="primary">hisA</name>
    <name type="ordered locus">ECA2587</name>
</gene>
<comment type="catalytic activity">
    <reaction evidence="1">
        <text>1-(5-phospho-beta-D-ribosyl)-5-[(5-phospho-beta-D-ribosylamino)methylideneamino]imidazole-4-carboxamide = 5-[(5-phospho-1-deoxy-D-ribulos-1-ylimino)methylamino]-1-(5-phospho-beta-D-ribosyl)imidazole-4-carboxamide</text>
        <dbReference type="Rhea" id="RHEA:15469"/>
        <dbReference type="ChEBI" id="CHEBI:58435"/>
        <dbReference type="ChEBI" id="CHEBI:58525"/>
        <dbReference type="EC" id="5.3.1.16"/>
    </reaction>
</comment>
<comment type="pathway">
    <text evidence="1">Amino-acid biosynthesis; L-histidine biosynthesis; L-histidine from 5-phospho-alpha-D-ribose 1-diphosphate: step 4/9.</text>
</comment>
<comment type="subcellular location">
    <subcellularLocation>
        <location evidence="1">Cytoplasm</location>
    </subcellularLocation>
</comment>
<comment type="similarity">
    <text evidence="1">Belongs to the HisA/HisF family.</text>
</comment>
<feature type="chain" id="PRO_0000142007" description="1-(5-phosphoribosyl)-5-[(5-phosphoribosylamino)methylideneamino] imidazole-4-carboxamide isomerase">
    <location>
        <begin position="1"/>
        <end position="245"/>
    </location>
</feature>
<feature type="active site" description="Proton acceptor" evidence="1">
    <location>
        <position position="7"/>
    </location>
</feature>
<feature type="active site" description="Proton donor" evidence="1">
    <location>
        <position position="129"/>
    </location>
</feature>
<keyword id="KW-0028">Amino-acid biosynthesis</keyword>
<keyword id="KW-0963">Cytoplasm</keyword>
<keyword id="KW-0368">Histidine biosynthesis</keyword>
<keyword id="KW-0413">Isomerase</keyword>
<keyword id="KW-1185">Reference proteome</keyword>
<proteinExistence type="inferred from homology"/>